<evidence type="ECO:0000255" key="1">
    <source>
        <dbReference type="HAMAP-Rule" id="MF_00182"/>
    </source>
</evidence>
<protein>
    <recommendedName>
        <fullName evidence="1">Methionyl-tRNA formyltransferase</fullName>
        <ecNumber evidence="1">2.1.2.9</ecNumber>
    </recommendedName>
</protein>
<feature type="chain" id="PRO_1000118469" description="Methionyl-tRNA formyltransferase">
    <location>
        <begin position="1"/>
        <end position="314"/>
    </location>
</feature>
<feature type="binding site" evidence="1">
    <location>
        <begin position="110"/>
        <end position="113"/>
    </location>
    <ligand>
        <name>(6S)-5,6,7,8-tetrahydrofolate</name>
        <dbReference type="ChEBI" id="CHEBI:57453"/>
    </ligand>
</feature>
<dbReference type="EC" id="2.1.2.9" evidence="1"/>
<dbReference type="EMBL" id="CP001186">
    <property type="protein sequence ID" value="ACK97047.1"/>
    <property type="molecule type" value="Genomic_DNA"/>
</dbReference>
<dbReference type="RefSeq" id="WP_000598805.1">
    <property type="nucleotide sequence ID" value="NC_011772.1"/>
</dbReference>
<dbReference type="SMR" id="B7IUM5"/>
<dbReference type="GeneID" id="67468032"/>
<dbReference type="KEGG" id="bcg:BCG9842_B1278"/>
<dbReference type="HOGENOM" id="CLU_033347_1_1_9"/>
<dbReference type="Proteomes" id="UP000006744">
    <property type="component" value="Chromosome"/>
</dbReference>
<dbReference type="GO" id="GO:0005829">
    <property type="term" value="C:cytosol"/>
    <property type="evidence" value="ECO:0007669"/>
    <property type="project" value="TreeGrafter"/>
</dbReference>
<dbReference type="GO" id="GO:0004479">
    <property type="term" value="F:methionyl-tRNA formyltransferase activity"/>
    <property type="evidence" value="ECO:0007669"/>
    <property type="project" value="UniProtKB-UniRule"/>
</dbReference>
<dbReference type="CDD" id="cd08646">
    <property type="entry name" value="FMT_core_Met-tRNA-FMT_N"/>
    <property type="match status" value="1"/>
</dbReference>
<dbReference type="CDD" id="cd08704">
    <property type="entry name" value="Met_tRNA_FMT_C"/>
    <property type="match status" value="1"/>
</dbReference>
<dbReference type="FunFam" id="3.10.25.10:FF:000003">
    <property type="entry name" value="Methionyl-tRNA formyltransferase"/>
    <property type="match status" value="1"/>
</dbReference>
<dbReference type="FunFam" id="3.40.50.170:FF:000004">
    <property type="entry name" value="Methionyl-tRNA formyltransferase"/>
    <property type="match status" value="1"/>
</dbReference>
<dbReference type="Gene3D" id="3.10.25.10">
    <property type="entry name" value="Formyl transferase, C-terminal domain"/>
    <property type="match status" value="1"/>
</dbReference>
<dbReference type="Gene3D" id="3.40.50.170">
    <property type="entry name" value="Formyl transferase, N-terminal domain"/>
    <property type="match status" value="1"/>
</dbReference>
<dbReference type="HAMAP" id="MF_00182">
    <property type="entry name" value="Formyl_trans"/>
    <property type="match status" value="1"/>
</dbReference>
<dbReference type="InterPro" id="IPR005794">
    <property type="entry name" value="Fmt"/>
</dbReference>
<dbReference type="InterPro" id="IPR005793">
    <property type="entry name" value="Formyl_trans_C"/>
</dbReference>
<dbReference type="InterPro" id="IPR037022">
    <property type="entry name" value="Formyl_trans_C_sf"/>
</dbReference>
<dbReference type="InterPro" id="IPR002376">
    <property type="entry name" value="Formyl_transf_N"/>
</dbReference>
<dbReference type="InterPro" id="IPR036477">
    <property type="entry name" value="Formyl_transf_N_sf"/>
</dbReference>
<dbReference type="InterPro" id="IPR011034">
    <property type="entry name" value="Formyl_transferase-like_C_sf"/>
</dbReference>
<dbReference type="InterPro" id="IPR001555">
    <property type="entry name" value="GART_AS"/>
</dbReference>
<dbReference type="InterPro" id="IPR044135">
    <property type="entry name" value="Met-tRNA-FMT_C"/>
</dbReference>
<dbReference type="InterPro" id="IPR041711">
    <property type="entry name" value="Met-tRNA-FMT_N"/>
</dbReference>
<dbReference type="NCBIfam" id="TIGR00460">
    <property type="entry name" value="fmt"/>
    <property type="match status" value="1"/>
</dbReference>
<dbReference type="PANTHER" id="PTHR11138">
    <property type="entry name" value="METHIONYL-TRNA FORMYLTRANSFERASE"/>
    <property type="match status" value="1"/>
</dbReference>
<dbReference type="PANTHER" id="PTHR11138:SF5">
    <property type="entry name" value="METHIONYL-TRNA FORMYLTRANSFERASE, MITOCHONDRIAL"/>
    <property type="match status" value="1"/>
</dbReference>
<dbReference type="Pfam" id="PF02911">
    <property type="entry name" value="Formyl_trans_C"/>
    <property type="match status" value="1"/>
</dbReference>
<dbReference type="Pfam" id="PF00551">
    <property type="entry name" value="Formyl_trans_N"/>
    <property type="match status" value="1"/>
</dbReference>
<dbReference type="SUPFAM" id="SSF50486">
    <property type="entry name" value="FMT C-terminal domain-like"/>
    <property type="match status" value="1"/>
</dbReference>
<dbReference type="SUPFAM" id="SSF53328">
    <property type="entry name" value="Formyltransferase"/>
    <property type="match status" value="1"/>
</dbReference>
<dbReference type="PROSITE" id="PS00373">
    <property type="entry name" value="GART"/>
    <property type="match status" value="1"/>
</dbReference>
<accession>B7IUM5</accession>
<comment type="function">
    <text evidence="1">Attaches a formyl group to the free amino group of methionyl-tRNA(fMet). The formyl group appears to play a dual role in the initiator identity of N-formylmethionyl-tRNA by promoting its recognition by IF2 and preventing the misappropriation of this tRNA by the elongation apparatus.</text>
</comment>
<comment type="catalytic activity">
    <reaction evidence="1">
        <text>L-methionyl-tRNA(fMet) + (6R)-10-formyltetrahydrofolate = N-formyl-L-methionyl-tRNA(fMet) + (6S)-5,6,7,8-tetrahydrofolate + H(+)</text>
        <dbReference type="Rhea" id="RHEA:24380"/>
        <dbReference type="Rhea" id="RHEA-COMP:9952"/>
        <dbReference type="Rhea" id="RHEA-COMP:9953"/>
        <dbReference type="ChEBI" id="CHEBI:15378"/>
        <dbReference type="ChEBI" id="CHEBI:57453"/>
        <dbReference type="ChEBI" id="CHEBI:78530"/>
        <dbReference type="ChEBI" id="CHEBI:78844"/>
        <dbReference type="ChEBI" id="CHEBI:195366"/>
        <dbReference type="EC" id="2.1.2.9"/>
    </reaction>
</comment>
<comment type="similarity">
    <text evidence="1">Belongs to the Fmt family.</text>
</comment>
<proteinExistence type="inferred from homology"/>
<gene>
    <name evidence="1" type="primary">fmt</name>
    <name type="ordered locus">BCG9842_B1278</name>
</gene>
<sequence>MIKVVFMGTPDFSVPVLRRLIEDGYEVVGVVTQPDRPVGRKKVLTPTPVKVEAEKHGIPVLQPLKIREKDEYEKVLALEPDLIVTAAFGQIVPNEILEAPKYGCINVHASLLPELRGGAPIHYAIMEGKEKTGITIMYMVEKLDAGDILTQVEVEIEERETTGSLFDKLSEAGAHLLSKTVPLLIQGKLEPIKQNEEEVTFAYNIKREQEKIDWTKTGEEVYNHIRGLNPWPVAYTTLAGQVVKVWWGEKVPVTEPAEAGTIVAIEEDGFVVATSNETGVKITELQPSGKKRMSCSQFLRGTKPEIGTKLGENA</sequence>
<reference key="1">
    <citation type="submission" date="2008-10" db="EMBL/GenBank/DDBJ databases">
        <title>Genome sequence of Bacillus cereus G9842.</title>
        <authorList>
            <person name="Dodson R.J."/>
            <person name="Durkin A.S."/>
            <person name="Rosovitz M.J."/>
            <person name="Rasko D.A."/>
            <person name="Hoffmaster A."/>
            <person name="Ravel J."/>
            <person name="Sutton G."/>
        </authorList>
    </citation>
    <scope>NUCLEOTIDE SEQUENCE [LARGE SCALE GENOMIC DNA]</scope>
    <source>
        <strain>G9842</strain>
    </source>
</reference>
<organism>
    <name type="scientific">Bacillus cereus (strain G9842)</name>
    <dbReference type="NCBI Taxonomy" id="405531"/>
    <lineage>
        <taxon>Bacteria</taxon>
        <taxon>Bacillati</taxon>
        <taxon>Bacillota</taxon>
        <taxon>Bacilli</taxon>
        <taxon>Bacillales</taxon>
        <taxon>Bacillaceae</taxon>
        <taxon>Bacillus</taxon>
        <taxon>Bacillus cereus group</taxon>
    </lineage>
</organism>
<keyword id="KW-0648">Protein biosynthesis</keyword>
<keyword id="KW-0808">Transferase</keyword>
<name>FMT_BACC2</name>